<feature type="chain" id="PRO_1000184583" description="dITP/XTP pyrophosphatase">
    <location>
        <begin position="1"/>
        <end position="232"/>
    </location>
</feature>
<feature type="active site" description="Proton acceptor" evidence="1">
    <location>
        <position position="72"/>
    </location>
</feature>
<feature type="binding site" evidence="1">
    <location>
        <begin position="10"/>
        <end position="15"/>
    </location>
    <ligand>
        <name>substrate</name>
    </ligand>
</feature>
<feature type="binding site" evidence="1">
    <location>
        <position position="72"/>
    </location>
    <ligand>
        <name>Mg(2+)</name>
        <dbReference type="ChEBI" id="CHEBI:18420"/>
    </ligand>
</feature>
<feature type="binding site" evidence="1">
    <location>
        <position position="73"/>
    </location>
    <ligand>
        <name>substrate</name>
    </ligand>
</feature>
<feature type="binding site" evidence="1">
    <location>
        <begin position="153"/>
        <end position="156"/>
    </location>
    <ligand>
        <name>substrate</name>
    </ligand>
</feature>
<feature type="binding site" evidence="1">
    <location>
        <position position="176"/>
    </location>
    <ligand>
        <name>substrate</name>
    </ligand>
</feature>
<feature type="binding site" evidence="1">
    <location>
        <begin position="181"/>
        <end position="182"/>
    </location>
    <ligand>
        <name>substrate</name>
    </ligand>
</feature>
<accession>A0LG38</accession>
<name>IXTPA_SYNFM</name>
<evidence type="ECO:0000255" key="1">
    <source>
        <dbReference type="HAMAP-Rule" id="MF_01405"/>
    </source>
</evidence>
<organism>
    <name type="scientific">Syntrophobacter fumaroxidans (strain DSM 10017 / MPOB)</name>
    <dbReference type="NCBI Taxonomy" id="335543"/>
    <lineage>
        <taxon>Bacteria</taxon>
        <taxon>Pseudomonadati</taxon>
        <taxon>Thermodesulfobacteriota</taxon>
        <taxon>Syntrophobacteria</taxon>
        <taxon>Syntrophobacterales</taxon>
        <taxon>Syntrophobacteraceae</taxon>
        <taxon>Syntrophobacter</taxon>
    </lineage>
</organism>
<keyword id="KW-0378">Hydrolase</keyword>
<keyword id="KW-0460">Magnesium</keyword>
<keyword id="KW-0479">Metal-binding</keyword>
<keyword id="KW-0546">Nucleotide metabolism</keyword>
<keyword id="KW-0547">Nucleotide-binding</keyword>
<keyword id="KW-1185">Reference proteome</keyword>
<sequence length="232" mass="25062">MEHAILVIATRNKGKSREIGKYLEHFPVEVRDLNDFGPIPEVVEDGATFEENAYKKALLTARVLGLPALADDSGLEVAALGGAPGIHSARYAGPDASDAANNEKLLAALSGVEDRAARFCCVLSLAVPSGPALTYEAFCEGTILTAPRGDNGFGYDPLFHYAPAGKTFAEMSLDEKAKVSHRGRALLELQREFDQVLKWLHARTADENLRRGVGHDMCVTGEDPRGTEPKME</sequence>
<protein>
    <recommendedName>
        <fullName evidence="1">dITP/XTP pyrophosphatase</fullName>
        <ecNumber evidence="1">3.6.1.66</ecNumber>
    </recommendedName>
    <alternativeName>
        <fullName evidence="1">Non-canonical purine NTP pyrophosphatase</fullName>
    </alternativeName>
    <alternativeName>
        <fullName evidence="1">Non-standard purine NTP pyrophosphatase</fullName>
    </alternativeName>
    <alternativeName>
        <fullName evidence="1">Nucleoside-triphosphate diphosphatase</fullName>
    </alternativeName>
    <alternativeName>
        <fullName evidence="1">Nucleoside-triphosphate pyrophosphatase</fullName>
        <shortName evidence="1">NTPase</shortName>
    </alternativeName>
</protein>
<dbReference type="EC" id="3.6.1.66" evidence="1"/>
<dbReference type="EMBL" id="CP000478">
    <property type="protein sequence ID" value="ABK16390.1"/>
    <property type="molecule type" value="Genomic_DNA"/>
</dbReference>
<dbReference type="RefSeq" id="WP_011697563.1">
    <property type="nucleotide sequence ID" value="NC_008554.1"/>
</dbReference>
<dbReference type="SMR" id="A0LG38"/>
<dbReference type="FunCoup" id="A0LG38">
    <property type="interactions" value="514"/>
</dbReference>
<dbReference type="STRING" id="335543.Sfum_0691"/>
<dbReference type="KEGG" id="sfu:Sfum_0691"/>
<dbReference type="eggNOG" id="COG0127">
    <property type="taxonomic scope" value="Bacteria"/>
</dbReference>
<dbReference type="HOGENOM" id="CLU_082080_0_2_7"/>
<dbReference type="InParanoid" id="A0LG38"/>
<dbReference type="OrthoDB" id="9807456at2"/>
<dbReference type="Proteomes" id="UP000001784">
    <property type="component" value="Chromosome"/>
</dbReference>
<dbReference type="GO" id="GO:0005829">
    <property type="term" value="C:cytosol"/>
    <property type="evidence" value="ECO:0007669"/>
    <property type="project" value="TreeGrafter"/>
</dbReference>
<dbReference type="GO" id="GO:0035870">
    <property type="term" value="F:dITP diphosphatase activity"/>
    <property type="evidence" value="ECO:0007669"/>
    <property type="project" value="RHEA"/>
</dbReference>
<dbReference type="GO" id="GO:0036220">
    <property type="term" value="F:ITP diphosphatase activity"/>
    <property type="evidence" value="ECO:0007669"/>
    <property type="project" value="UniProtKB-EC"/>
</dbReference>
<dbReference type="GO" id="GO:0046872">
    <property type="term" value="F:metal ion binding"/>
    <property type="evidence" value="ECO:0007669"/>
    <property type="project" value="UniProtKB-KW"/>
</dbReference>
<dbReference type="GO" id="GO:0000166">
    <property type="term" value="F:nucleotide binding"/>
    <property type="evidence" value="ECO:0007669"/>
    <property type="project" value="UniProtKB-KW"/>
</dbReference>
<dbReference type="GO" id="GO:0017111">
    <property type="term" value="F:ribonucleoside triphosphate phosphatase activity"/>
    <property type="evidence" value="ECO:0007669"/>
    <property type="project" value="InterPro"/>
</dbReference>
<dbReference type="GO" id="GO:0036222">
    <property type="term" value="F:XTP diphosphatase activity"/>
    <property type="evidence" value="ECO:0007669"/>
    <property type="project" value="RHEA"/>
</dbReference>
<dbReference type="GO" id="GO:0009117">
    <property type="term" value="P:nucleotide metabolic process"/>
    <property type="evidence" value="ECO:0007669"/>
    <property type="project" value="UniProtKB-KW"/>
</dbReference>
<dbReference type="GO" id="GO:0009146">
    <property type="term" value="P:purine nucleoside triphosphate catabolic process"/>
    <property type="evidence" value="ECO:0007669"/>
    <property type="project" value="UniProtKB-UniRule"/>
</dbReference>
<dbReference type="CDD" id="cd00515">
    <property type="entry name" value="HAM1"/>
    <property type="match status" value="1"/>
</dbReference>
<dbReference type="FunFam" id="3.90.950.10:FF:000001">
    <property type="entry name" value="dITP/XTP pyrophosphatase"/>
    <property type="match status" value="1"/>
</dbReference>
<dbReference type="Gene3D" id="3.90.950.10">
    <property type="match status" value="1"/>
</dbReference>
<dbReference type="HAMAP" id="MF_01405">
    <property type="entry name" value="Non_canon_purine_NTPase"/>
    <property type="match status" value="1"/>
</dbReference>
<dbReference type="InterPro" id="IPR020922">
    <property type="entry name" value="dITP/XTP_pyrophosphatase"/>
</dbReference>
<dbReference type="InterPro" id="IPR029001">
    <property type="entry name" value="ITPase-like_fam"/>
</dbReference>
<dbReference type="InterPro" id="IPR002637">
    <property type="entry name" value="RdgB/HAM1"/>
</dbReference>
<dbReference type="NCBIfam" id="NF011397">
    <property type="entry name" value="PRK14822.1"/>
    <property type="match status" value="1"/>
</dbReference>
<dbReference type="NCBIfam" id="TIGR00042">
    <property type="entry name" value="RdgB/HAM1 family non-canonical purine NTP pyrophosphatase"/>
    <property type="match status" value="1"/>
</dbReference>
<dbReference type="PANTHER" id="PTHR11067:SF9">
    <property type="entry name" value="INOSINE TRIPHOSPHATE PYROPHOSPHATASE"/>
    <property type="match status" value="1"/>
</dbReference>
<dbReference type="PANTHER" id="PTHR11067">
    <property type="entry name" value="INOSINE TRIPHOSPHATE PYROPHOSPHATASE/HAM1 PROTEIN"/>
    <property type="match status" value="1"/>
</dbReference>
<dbReference type="Pfam" id="PF01725">
    <property type="entry name" value="Ham1p_like"/>
    <property type="match status" value="1"/>
</dbReference>
<dbReference type="SUPFAM" id="SSF52972">
    <property type="entry name" value="ITPase-like"/>
    <property type="match status" value="1"/>
</dbReference>
<reference key="1">
    <citation type="submission" date="2006-10" db="EMBL/GenBank/DDBJ databases">
        <title>Complete sequence of Syntrophobacter fumaroxidans MPOB.</title>
        <authorList>
            <consortium name="US DOE Joint Genome Institute"/>
            <person name="Copeland A."/>
            <person name="Lucas S."/>
            <person name="Lapidus A."/>
            <person name="Barry K."/>
            <person name="Detter J.C."/>
            <person name="Glavina del Rio T."/>
            <person name="Hammon N."/>
            <person name="Israni S."/>
            <person name="Pitluck S."/>
            <person name="Goltsman E.G."/>
            <person name="Martinez M."/>
            <person name="Schmutz J."/>
            <person name="Larimer F."/>
            <person name="Land M."/>
            <person name="Hauser L."/>
            <person name="Kyrpides N."/>
            <person name="Kim E."/>
            <person name="Boone D.R."/>
            <person name="Brockman F."/>
            <person name="Culley D."/>
            <person name="Ferry J."/>
            <person name="Gunsalus R."/>
            <person name="McInerney M.J."/>
            <person name="Morrison M."/>
            <person name="Plugge C."/>
            <person name="Rohlin L."/>
            <person name="Scholten J."/>
            <person name="Sieber J."/>
            <person name="Stams A.J.M."/>
            <person name="Worm P."/>
            <person name="Henstra A.M."/>
            <person name="Richardson P."/>
        </authorList>
    </citation>
    <scope>NUCLEOTIDE SEQUENCE [LARGE SCALE GENOMIC DNA]</scope>
    <source>
        <strain>DSM 10017 / MPOB</strain>
    </source>
</reference>
<comment type="function">
    <text evidence="1">Pyrophosphatase that catalyzes the hydrolysis of nucleoside triphosphates to their monophosphate derivatives, with a high preference for the non-canonical purine nucleotides XTP (xanthosine triphosphate), dITP (deoxyinosine triphosphate) and ITP. Seems to function as a house-cleaning enzyme that removes non-canonical purine nucleotides from the nucleotide pool, thus preventing their incorporation into DNA/RNA and avoiding chromosomal lesions.</text>
</comment>
<comment type="catalytic activity">
    <reaction evidence="1">
        <text>XTP + H2O = XMP + diphosphate + H(+)</text>
        <dbReference type="Rhea" id="RHEA:28610"/>
        <dbReference type="ChEBI" id="CHEBI:15377"/>
        <dbReference type="ChEBI" id="CHEBI:15378"/>
        <dbReference type="ChEBI" id="CHEBI:33019"/>
        <dbReference type="ChEBI" id="CHEBI:57464"/>
        <dbReference type="ChEBI" id="CHEBI:61314"/>
        <dbReference type="EC" id="3.6.1.66"/>
    </reaction>
</comment>
<comment type="catalytic activity">
    <reaction evidence="1">
        <text>dITP + H2O = dIMP + diphosphate + H(+)</text>
        <dbReference type="Rhea" id="RHEA:28342"/>
        <dbReference type="ChEBI" id="CHEBI:15377"/>
        <dbReference type="ChEBI" id="CHEBI:15378"/>
        <dbReference type="ChEBI" id="CHEBI:33019"/>
        <dbReference type="ChEBI" id="CHEBI:61194"/>
        <dbReference type="ChEBI" id="CHEBI:61382"/>
        <dbReference type="EC" id="3.6.1.66"/>
    </reaction>
</comment>
<comment type="catalytic activity">
    <reaction evidence="1">
        <text>ITP + H2O = IMP + diphosphate + H(+)</text>
        <dbReference type="Rhea" id="RHEA:29399"/>
        <dbReference type="ChEBI" id="CHEBI:15377"/>
        <dbReference type="ChEBI" id="CHEBI:15378"/>
        <dbReference type="ChEBI" id="CHEBI:33019"/>
        <dbReference type="ChEBI" id="CHEBI:58053"/>
        <dbReference type="ChEBI" id="CHEBI:61402"/>
        <dbReference type="EC" id="3.6.1.66"/>
    </reaction>
</comment>
<comment type="cofactor">
    <cofactor evidence="1">
        <name>Mg(2+)</name>
        <dbReference type="ChEBI" id="CHEBI:18420"/>
    </cofactor>
    <text evidence="1">Binds 1 Mg(2+) ion per subunit.</text>
</comment>
<comment type="subunit">
    <text evidence="1">Homodimer.</text>
</comment>
<comment type="similarity">
    <text evidence="1">Belongs to the HAM1 NTPase family.</text>
</comment>
<proteinExistence type="inferred from homology"/>
<gene>
    <name type="ordered locus">Sfum_0691</name>
</gene>